<comment type="function">
    <text evidence="1">Located at the top of the head of the 40S subunit, it contacts several helices of the 18S rRNA.</text>
</comment>
<comment type="subcellular location">
    <subcellularLocation>
        <location>Cytoplasm</location>
    </subcellularLocation>
</comment>
<comment type="similarity">
    <text evidence="3">Belongs to the universal ribosomal protein uS13 family.</text>
</comment>
<protein>
    <recommendedName>
        <fullName evidence="3">Small ribosomal subunit protein uS13</fullName>
    </recommendedName>
    <alternativeName>
        <fullName>40S ribosomal protein S18</fullName>
    </alternativeName>
</protein>
<reference key="1">
    <citation type="journal article" date="1994" name="Gene">
        <title>The Drosophila melanogaster homolog of ribosomal protein S18.</title>
        <authorList>
            <person name="Garwood J."/>
            <person name="Lepesant J.-A."/>
        </authorList>
    </citation>
    <scope>NUCLEOTIDE SEQUENCE [MRNA]</scope>
    <source>
        <strain>Canton-S</strain>
    </source>
</reference>
<reference key="2">
    <citation type="journal article" date="2000" name="Science">
        <title>The genome sequence of Drosophila melanogaster.</title>
        <authorList>
            <person name="Adams M.D."/>
            <person name="Celniker S.E."/>
            <person name="Holt R.A."/>
            <person name="Evans C.A."/>
            <person name="Gocayne J.D."/>
            <person name="Amanatides P.G."/>
            <person name="Scherer S.E."/>
            <person name="Li P.W."/>
            <person name="Hoskins R.A."/>
            <person name="Galle R.F."/>
            <person name="George R.A."/>
            <person name="Lewis S.E."/>
            <person name="Richards S."/>
            <person name="Ashburner M."/>
            <person name="Henderson S.N."/>
            <person name="Sutton G.G."/>
            <person name="Wortman J.R."/>
            <person name="Yandell M.D."/>
            <person name="Zhang Q."/>
            <person name="Chen L.X."/>
            <person name="Brandon R.C."/>
            <person name="Rogers Y.-H.C."/>
            <person name="Blazej R.G."/>
            <person name="Champe M."/>
            <person name="Pfeiffer B.D."/>
            <person name="Wan K.H."/>
            <person name="Doyle C."/>
            <person name="Baxter E.G."/>
            <person name="Helt G."/>
            <person name="Nelson C.R."/>
            <person name="Miklos G.L.G."/>
            <person name="Abril J.F."/>
            <person name="Agbayani A."/>
            <person name="An H.-J."/>
            <person name="Andrews-Pfannkoch C."/>
            <person name="Baldwin D."/>
            <person name="Ballew R.M."/>
            <person name="Basu A."/>
            <person name="Baxendale J."/>
            <person name="Bayraktaroglu L."/>
            <person name="Beasley E.M."/>
            <person name="Beeson K.Y."/>
            <person name="Benos P.V."/>
            <person name="Berman B.P."/>
            <person name="Bhandari D."/>
            <person name="Bolshakov S."/>
            <person name="Borkova D."/>
            <person name="Botchan M.R."/>
            <person name="Bouck J."/>
            <person name="Brokstein P."/>
            <person name="Brottier P."/>
            <person name="Burtis K.C."/>
            <person name="Busam D.A."/>
            <person name="Butler H."/>
            <person name="Cadieu E."/>
            <person name="Center A."/>
            <person name="Chandra I."/>
            <person name="Cherry J.M."/>
            <person name="Cawley S."/>
            <person name="Dahlke C."/>
            <person name="Davenport L.B."/>
            <person name="Davies P."/>
            <person name="de Pablos B."/>
            <person name="Delcher A."/>
            <person name="Deng Z."/>
            <person name="Mays A.D."/>
            <person name="Dew I."/>
            <person name="Dietz S.M."/>
            <person name="Dodson K."/>
            <person name="Doup L.E."/>
            <person name="Downes M."/>
            <person name="Dugan-Rocha S."/>
            <person name="Dunkov B.C."/>
            <person name="Dunn P."/>
            <person name="Durbin K.J."/>
            <person name="Evangelista C.C."/>
            <person name="Ferraz C."/>
            <person name="Ferriera S."/>
            <person name="Fleischmann W."/>
            <person name="Fosler C."/>
            <person name="Gabrielian A.E."/>
            <person name="Garg N.S."/>
            <person name="Gelbart W.M."/>
            <person name="Glasser K."/>
            <person name="Glodek A."/>
            <person name="Gong F."/>
            <person name="Gorrell J.H."/>
            <person name="Gu Z."/>
            <person name="Guan P."/>
            <person name="Harris M."/>
            <person name="Harris N.L."/>
            <person name="Harvey D.A."/>
            <person name="Heiman T.J."/>
            <person name="Hernandez J.R."/>
            <person name="Houck J."/>
            <person name="Hostin D."/>
            <person name="Houston K.A."/>
            <person name="Howland T.J."/>
            <person name="Wei M.-H."/>
            <person name="Ibegwam C."/>
            <person name="Jalali M."/>
            <person name="Kalush F."/>
            <person name="Karpen G.H."/>
            <person name="Ke Z."/>
            <person name="Kennison J.A."/>
            <person name="Ketchum K.A."/>
            <person name="Kimmel B.E."/>
            <person name="Kodira C.D."/>
            <person name="Kraft C.L."/>
            <person name="Kravitz S."/>
            <person name="Kulp D."/>
            <person name="Lai Z."/>
            <person name="Lasko P."/>
            <person name="Lei Y."/>
            <person name="Levitsky A.A."/>
            <person name="Li J.H."/>
            <person name="Li Z."/>
            <person name="Liang Y."/>
            <person name="Lin X."/>
            <person name="Liu X."/>
            <person name="Mattei B."/>
            <person name="McIntosh T.C."/>
            <person name="McLeod M.P."/>
            <person name="McPherson D."/>
            <person name="Merkulov G."/>
            <person name="Milshina N.V."/>
            <person name="Mobarry C."/>
            <person name="Morris J."/>
            <person name="Moshrefi A."/>
            <person name="Mount S.M."/>
            <person name="Moy M."/>
            <person name="Murphy B."/>
            <person name="Murphy L."/>
            <person name="Muzny D.M."/>
            <person name="Nelson D.L."/>
            <person name="Nelson D.R."/>
            <person name="Nelson K.A."/>
            <person name="Nixon K."/>
            <person name="Nusskern D.R."/>
            <person name="Pacleb J.M."/>
            <person name="Palazzolo M."/>
            <person name="Pittman G.S."/>
            <person name="Pan S."/>
            <person name="Pollard J."/>
            <person name="Puri V."/>
            <person name="Reese M.G."/>
            <person name="Reinert K."/>
            <person name="Remington K."/>
            <person name="Saunders R.D.C."/>
            <person name="Scheeler F."/>
            <person name="Shen H."/>
            <person name="Shue B.C."/>
            <person name="Siden-Kiamos I."/>
            <person name="Simpson M."/>
            <person name="Skupski M.P."/>
            <person name="Smith T.J."/>
            <person name="Spier E."/>
            <person name="Spradling A.C."/>
            <person name="Stapleton M."/>
            <person name="Strong R."/>
            <person name="Sun E."/>
            <person name="Svirskas R."/>
            <person name="Tector C."/>
            <person name="Turner R."/>
            <person name="Venter E."/>
            <person name="Wang A.H."/>
            <person name="Wang X."/>
            <person name="Wang Z.-Y."/>
            <person name="Wassarman D.A."/>
            <person name="Weinstock G.M."/>
            <person name="Weissenbach J."/>
            <person name="Williams S.M."/>
            <person name="Woodage T."/>
            <person name="Worley K.C."/>
            <person name="Wu D."/>
            <person name="Yang S."/>
            <person name="Yao Q.A."/>
            <person name="Ye J."/>
            <person name="Yeh R.-F."/>
            <person name="Zaveri J.S."/>
            <person name="Zhan M."/>
            <person name="Zhang G."/>
            <person name="Zhao Q."/>
            <person name="Zheng L."/>
            <person name="Zheng X.H."/>
            <person name="Zhong F.N."/>
            <person name="Zhong W."/>
            <person name="Zhou X."/>
            <person name="Zhu S.C."/>
            <person name="Zhu X."/>
            <person name="Smith H.O."/>
            <person name="Gibbs R.A."/>
            <person name="Myers E.W."/>
            <person name="Rubin G.M."/>
            <person name="Venter J.C."/>
        </authorList>
    </citation>
    <scope>NUCLEOTIDE SEQUENCE [LARGE SCALE GENOMIC DNA]</scope>
    <source>
        <strain>Berkeley</strain>
    </source>
</reference>
<reference key="3">
    <citation type="journal article" date="2002" name="Genome Biol.">
        <title>Annotation of the Drosophila melanogaster euchromatic genome: a systematic review.</title>
        <authorList>
            <person name="Misra S."/>
            <person name="Crosby M.A."/>
            <person name="Mungall C.J."/>
            <person name="Matthews B.B."/>
            <person name="Campbell K.S."/>
            <person name="Hradecky P."/>
            <person name="Huang Y."/>
            <person name="Kaminker J.S."/>
            <person name="Millburn G.H."/>
            <person name="Prochnik S.E."/>
            <person name="Smith C.D."/>
            <person name="Tupy J.L."/>
            <person name="Whitfield E.J."/>
            <person name="Bayraktaroglu L."/>
            <person name="Berman B.P."/>
            <person name="Bettencourt B.R."/>
            <person name="Celniker S.E."/>
            <person name="de Grey A.D.N.J."/>
            <person name="Drysdale R.A."/>
            <person name="Harris N.L."/>
            <person name="Richter J."/>
            <person name="Russo S."/>
            <person name="Schroeder A.J."/>
            <person name="Shu S.Q."/>
            <person name="Stapleton M."/>
            <person name="Yamada C."/>
            <person name="Ashburner M."/>
            <person name="Gelbart W.M."/>
            <person name="Rubin G.M."/>
            <person name="Lewis S.E."/>
        </authorList>
    </citation>
    <scope>GENOME REANNOTATION</scope>
    <source>
        <strain>Berkeley</strain>
    </source>
</reference>
<reference key="4">
    <citation type="journal article" date="2002" name="Genome Biol.">
        <title>A Drosophila full-length cDNA resource.</title>
        <authorList>
            <person name="Stapleton M."/>
            <person name="Carlson J.W."/>
            <person name="Brokstein P."/>
            <person name="Yu C."/>
            <person name="Champe M."/>
            <person name="George R.A."/>
            <person name="Guarin H."/>
            <person name="Kronmiller B."/>
            <person name="Pacleb J.M."/>
            <person name="Park S."/>
            <person name="Wan K.H."/>
            <person name="Rubin G.M."/>
            <person name="Celniker S.E."/>
        </authorList>
    </citation>
    <scope>NUCLEOTIDE SEQUENCE [LARGE SCALE MRNA]</scope>
    <source>
        <strain>Berkeley</strain>
        <tissue>Head</tissue>
    </source>
</reference>
<reference key="5">
    <citation type="submission" date="2006-03" db="EMBL/GenBank/DDBJ databases">
        <authorList>
            <person name="Stapleton M."/>
            <person name="Carlson J.W."/>
            <person name="Chavez C."/>
            <person name="Frise E."/>
            <person name="George R.A."/>
            <person name="Pacleb J.M."/>
            <person name="Park S."/>
            <person name="Wan K.H."/>
            <person name="Yu C."/>
            <person name="Celniker S.E."/>
        </authorList>
    </citation>
    <scope>NUCLEOTIDE SEQUENCE [LARGE SCALE MRNA]</scope>
    <source>
        <strain>Berkeley</strain>
    </source>
</reference>
<reference key="6">
    <citation type="journal article" date="2008" name="J. Proteome Res.">
        <title>Phosphoproteome analysis of Drosophila melanogaster embryos.</title>
        <authorList>
            <person name="Zhai B."/>
            <person name="Villen J."/>
            <person name="Beausoleil S.A."/>
            <person name="Mintseris J."/>
            <person name="Gygi S.P."/>
        </authorList>
    </citation>
    <scope>PHOSPHORYLATION [LARGE SCALE ANALYSIS] AT SER-41</scope>
    <scope>IDENTIFICATION BY MASS SPECTROMETRY</scope>
    <source>
        <tissue>Embryo</tissue>
    </source>
</reference>
<reference key="7">
    <citation type="journal article" date="2013" name="Nature">
        <title>Structures of the human and Drosophila 80S ribosome.</title>
        <authorList>
            <person name="Anger A.M."/>
            <person name="Armache J.P."/>
            <person name="Berninghausen O."/>
            <person name="Habeck M."/>
            <person name="Subklewe M."/>
            <person name="Wilson D.N."/>
            <person name="Beckmann R."/>
        </authorList>
    </citation>
    <scope>STRUCTURE BY ELECTRON MICROSCOPY (6.0 ANGSTROMS) OF THE 80S RIBOSOME</scope>
</reference>
<feature type="chain" id="PRO_0000132220" description="Small ribosomal subunit protein uS13">
    <location>
        <begin position="1"/>
        <end position="152"/>
    </location>
</feature>
<feature type="modified residue" description="Phosphoserine" evidence="2">
    <location>
        <position position="41"/>
    </location>
</feature>
<feature type="sequence conflict" description="In Ref. 4; AAM48463." evidence="3" ref="4">
    <original>H</original>
    <variation>R</variation>
    <location>
        <position position="11"/>
    </location>
</feature>
<keyword id="KW-0002">3D-structure</keyword>
<keyword id="KW-0963">Cytoplasm</keyword>
<keyword id="KW-0597">Phosphoprotein</keyword>
<keyword id="KW-1185">Reference proteome</keyword>
<keyword id="KW-0687">Ribonucleoprotein</keyword>
<keyword id="KW-0689">Ribosomal protein</keyword>
<keyword id="KW-0694">RNA-binding</keyword>
<keyword id="KW-0699">rRNA-binding</keyword>
<proteinExistence type="evidence at protein level"/>
<sequence>MSLVIPEKFQHILRIMNTNIDGKRKVGIAMTAIKGVGRRYSNIVLKKADVDLTKRAGECTEEEVDKVVTIISNPLQYKVPNWFLNRQKDIIDGKYWQLTSSNLDSKLRDDLERLKKIRSHRGLRHYWGLRVRGQHTKTTGRRGRTVGVSKKK</sequence>
<dbReference type="EMBL" id="L22959">
    <property type="protein sequence ID" value="AAA28870.1"/>
    <property type="molecule type" value="mRNA"/>
</dbReference>
<dbReference type="EMBL" id="AE013599">
    <property type="protein sequence ID" value="AAF57491.1"/>
    <property type="molecule type" value="Genomic_DNA"/>
</dbReference>
<dbReference type="EMBL" id="AY118434">
    <property type="protein sequence ID" value="AAM48463.1"/>
    <property type="molecule type" value="mRNA"/>
</dbReference>
<dbReference type="EMBL" id="BT024929">
    <property type="protein sequence ID" value="ABE01159.1"/>
    <property type="molecule type" value="mRNA"/>
</dbReference>
<dbReference type="RefSeq" id="NP_476964.1">
    <property type="nucleotide sequence ID" value="NM_057616.6"/>
</dbReference>
<dbReference type="RefSeq" id="NP_725943.1">
    <property type="nucleotide sequence ID" value="NM_166383.4"/>
</dbReference>
<dbReference type="PDB" id="4V6W">
    <property type="method" value="EM"/>
    <property type="resolution" value="6.00 A"/>
    <property type="chains" value="AS=1-152"/>
</dbReference>
<dbReference type="PDB" id="6XU6">
    <property type="method" value="EM"/>
    <property type="resolution" value="3.50 A"/>
    <property type="chains" value="AS=8-141"/>
</dbReference>
<dbReference type="PDB" id="6XU7">
    <property type="method" value="EM"/>
    <property type="resolution" value="4.90 A"/>
    <property type="chains" value="AS=6-142"/>
</dbReference>
<dbReference type="PDB" id="6XU8">
    <property type="method" value="EM"/>
    <property type="resolution" value="3.00 A"/>
    <property type="chains" value="AS=6-141"/>
</dbReference>
<dbReference type="PDBsum" id="4V6W"/>
<dbReference type="PDBsum" id="6XU6"/>
<dbReference type="PDBsum" id="6XU7"/>
<dbReference type="PDBsum" id="6XU8"/>
<dbReference type="EMDB" id="EMD-10622"/>
<dbReference type="EMDB" id="EMD-10623"/>
<dbReference type="EMDB" id="EMD-10624"/>
<dbReference type="SMR" id="P41094"/>
<dbReference type="BioGRID" id="62947">
    <property type="interactions" value="103"/>
</dbReference>
<dbReference type="DIP" id="DIP-21027N"/>
<dbReference type="FunCoup" id="P41094">
    <property type="interactions" value="1270"/>
</dbReference>
<dbReference type="STRING" id="7227.FBpp0085585"/>
<dbReference type="iPTMnet" id="P41094"/>
<dbReference type="PaxDb" id="7227-FBpp0085585"/>
<dbReference type="DNASU" id="37292"/>
<dbReference type="EnsemblMetazoa" id="FBtr0086273">
    <property type="protein sequence ID" value="FBpp0085585"/>
    <property type="gene ID" value="FBgn0010411"/>
</dbReference>
<dbReference type="EnsemblMetazoa" id="FBtr0086274">
    <property type="protein sequence ID" value="FBpp0085586"/>
    <property type="gene ID" value="FBgn0010411"/>
</dbReference>
<dbReference type="GeneID" id="37292"/>
<dbReference type="KEGG" id="dme:Dmel_CG8900"/>
<dbReference type="AGR" id="FB:FBgn0010411"/>
<dbReference type="CTD" id="6222"/>
<dbReference type="FlyBase" id="FBgn0010411">
    <property type="gene designation" value="RpS18"/>
</dbReference>
<dbReference type="VEuPathDB" id="VectorBase:FBgn0010411"/>
<dbReference type="eggNOG" id="KOG3311">
    <property type="taxonomic scope" value="Eukaryota"/>
</dbReference>
<dbReference type="GeneTree" id="ENSGT00390000012691"/>
<dbReference type="HOGENOM" id="CLU_103849_0_1_1"/>
<dbReference type="InParanoid" id="P41094"/>
<dbReference type="OMA" id="SYKGVRH"/>
<dbReference type="OrthoDB" id="1702480at2759"/>
<dbReference type="PhylomeDB" id="P41094"/>
<dbReference type="Reactome" id="R-DME-156827">
    <property type="pathway name" value="L13a-mediated translational silencing of Ceruloplasmin expression"/>
</dbReference>
<dbReference type="Reactome" id="R-DME-1799339">
    <property type="pathway name" value="SRP-dependent cotranslational protein targeting to membrane"/>
</dbReference>
<dbReference type="Reactome" id="R-DME-72649">
    <property type="pathway name" value="Translation initiation complex formation"/>
</dbReference>
<dbReference type="Reactome" id="R-DME-72689">
    <property type="pathway name" value="Formation of a pool of free 40S subunits"/>
</dbReference>
<dbReference type="Reactome" id="R-DME-72695">
    <property type="pathway name" value="Formation of the ternary complex, and subsequently, the 43S complex"/>
</dbReference>
<dbReference type="Reactome" id="R-DME-72702">
    <property type="pathway name" value="Ribosomal scanning and start codon recognition"/>
</dbReference>
<dbReference type="Reactome" id="R-DME-72706">
    <property type="pathway name" value="GTP hydrolysis and joining of the 60S ribosomal subunit"/>
</dbReference>
<dbReference type="Reactome" id="R-DME-975956">
    <property type="pathway name" value="Nonsense Mediated Decay (NMD) independent of the Exon Junction Complex (EJC)"/>
</dbReference>
<dbReference type="Reactome" id="R-DME-975957">
    <property type="pathway name" value="Nonsense Mediated Decay (NMD) enhanced by the Exon Junction Complex (EJC)"/>
</dbReference>
<dbReference type="BioGRID-ORCS" id="37292">
    <property type="hits" value="1 hit in 1 CRISPR screen"/>
</dbReference>
<dbReference type="ChiTaRS" id="RpS18">
    <property type="organism name" value="fly"/>
</dbReference>
<dbReference type="GenomeRNAi" id="37292"/>
<dbReference type="PRO" id="PR:P41094"/>
<dbReference type="Proteomes" id="UP000000803">
    <property type="component" value="Chromosome 2R"/>
</dbReference>
<dbReference type="Bgee" id="FBgn0010411">
    <property type="expression patterns" value="Expressed in crop (Drosophila) and 294 other cell types or tissues"/>
</dbReference>
<dbReference type="ExpressionAtlas" id="P41094">
    <property type="expression patterns" value="baseline and differential"/>
</dbReference>
<dbReference type="GO" id="GO:0005737">
    <property type="term" value="C:cytoplasm"/>
    <property type="evidence" value="ECO:0000314"/>
    <property type="project" value="FlyBase"/>
</dbReference>
<dbReference type="GO" id="GO:0005829">
    <property type="term" value="C:cytosol"/>
    <property type="evidence" value="ECO:0000318"/>
    <property type="project" value="GO_Central"/>
</dbReference>
<dbReference type="GO" id="GO:0022626">
    <property type="term" value="C:cytosolic ribosome"/>
    <property type="evidence" value="ECO:0000314"/>
    <property type="project" value="FlyBase"/>
</dbReference>
<dbReference type="GO" id="GO:0022627">
    <property type="term" value="C:cytosolic small ribosomal subunit"/>
    <property type="evidence" value="ECO:0000250"/>
    <property type="project" value="FlyBase"/>
</dbReference>
<dbReference type="GO" id="GO:0005730">
    <property type="term" value="C:nucleolus"/>
    <property type="evidence" value="ECO:0000314"/>
    <property type="project" value="FlyBase"/>
</dbReference>
<dbReference type="GO" id="GO:0015935">
    <property type="term" value="C:small ribosomal subunit"/>
    <property type="evidence" value="ECO:0000318"/>
    <property type="project" value="GO_Central"/>
</dbReference>
<dbReference type="GO" id="GO:0019843">
    <property type="term" value="F:rRNA binding"/>
    <property type="evidence" value="ECO:0007669"/>
    <property type="project" value="UniProtKB-KW"/>
</dbReference>
<dbReference type="GO" id="GO:0003735">
    <property type="term" value="F:structural constituent of ribosome"/>
    <property type="evidence" value="ECO:0000314"/>
    <property type="project" value="FlyBase"/>
</dbReference>
<dbReference type="GO" id="GO:0002181">
    <property type="term" value="P:cytoplasmic translation"/>
    <property type="evidence" value="ECO:0000304"/>
    <property type="project" value="FlyBase"/>
</dbReference>
<dbReference type="FunFam" id="1.10.8.50:FF:000002">
    <property type="entry name" value="40S ribosomal protein S18"/>
    <property type="match status" value="1"/>
</dbReference>
<dbReference type="FunFam" id="4.10.910.10:FF:000002">
    <property type="entry name" value="40S ribosomal protein S18"/>
    <property type="match status" value="1"/>
</dbReference>
<dbReference type="Gene3D" id="1.10.8.50">
    <property type="match status" value="1"/>
</dbReference>
<dbReference type="Gene3D" id="4.10.910.10">
    <property type="entry name" value="30s ribosomal protein s13, domain 2"/>
    <property type="match status" value="1"/>
</dbReference>
<dbReference type="HAMAP" id="MF_01315">
    <property type="entry name" value="Ribosomal_uS13"/>
    <property type="match status" value="1"/>
</dbReference>
<dbReference type="InterPro" id="IPR027437">
    <property type="entry name" value="Rbsml_uS13_C"/>
</dbReference>
<dbReference type="InterPro" id="IPR001892">
    <property type="entry name" value="Ribosomal_uS13"/>
</dbReference>
<dbReference type="InterPro" id="IPR010979">
    <property type="entry name" value="Ribosomal_uS13-like_H2TH"/>
</dbReference>
<dbReference type="InterPro" id="IPR018269">
    <property type="entry name" value="Ribosomal_uS13_CS"/>
</dbReference>
<dbReference type="NCBIfam" id="NF003140">
    <property type="entry name" value="PRK04053.1"/>
    <property type="match status" value="1"/>
</dbReference>
<dbReference type="PANTHER" id="PTHR10871">
    <property type="entry name" value="30S RIBOSOMAL PROTEIN S13/40S RIBOSOMAL PROTEIN S18"/>
    <property type="match status" value="1"/>
</dbReference>
<dbReference type="PANTHER" id="PTHR10871:SF3">
    <property type="entry name" value="SMALL RIBOSOMAL SUBUNIT PROTEIN US13"/>
    <property type="match status" value="1"/>
</dbReference>
<dbReference type="Pfam" id="PF00416">
    <property type="entry name" value="Ribosomal_S13"/>
    <property type="match status" value="1"/>
</dbReference>
<dbReference type="PIRSF" id="PIRSF002134">
    <property type="entry name" value="Ribosomal_S13"/>
    <property type="match status" value="1"/>
</dbReference>
<dbReference type="SUPFAM" id="SSF46946">
    <property type="entry name" value="S13-like H2TH domain"/>
    <property type="match status" value="1"/>
</dbReference>
<dbReference type="PROSITE" id="PS00646">
    <property type="entry name" value="RIBOSOMAL_S13_1"/>
    <property type="match status" value="1"/>
</dbReference>
<dbReference type="PROSITE" id="PS50159">
    <property type="entry name" value="RIBOSOMAL_S13_2"/>
    <property type="match status" value="1"/>
</dbReference>
<gene>
    <name type="primary">RpS18</name>
    <name type="ORF">CG8900</name>
</gene>
<accession>P41094</accession>
<accession>Q1WWH7</accession>
<accession>Q8MT19</accession>
<accession>Q9V911</accession>
<organism>
    <name type="scientific">Drosophila melanogaster</name>
    <name type="common">Fruit fly</name>
    <dbReference type="NCBI Taxonomy" id="7227"/>
    <lineage>
        <taxon>Eukaryota</taxon>
        <taxon>Metazoa</taxon>
        <taxon>Ecdysozoa</taxon>
        <taxon>Arthropoda</taxon>
        <taxon>Hexapoda</taxon>
        <taxon>Insecta</taxon>
        <taxon>Pterygota</taxon>
        <taxon>Neoptera</taxon>
        <taxon>Endopterygota</taxon>
        <taxon>Diptera</taxon>
        <taxon>Brachycera</taxon>
        <taxon>Muscomorpha</taxon>
        <taxon>Ephydroidea</taxon>
        <taxon>Drosophilidae</taxon>
        <taxon>Drosophila</taxon>
        <taxon>Sophophora</taxon>
    </lineage>
</organism>
<evidence type="ECO:0000250" key="1"/>
<evidence type="ECO:0000269" key="2">
    <source>
    </source>
</evidence>
<evidence type="ECO:0000305" key="3"/>
<name>RS18_DROME</name>